<dbReference type="EC" id="3.1.1.29" evidence="1"/>
<dbReference type="EMBL" id="CP000557">
    <property type="protein sequence ID" value="ABO65433.1"/>
    <property type="molecule type" value="Genomic_DNA"/>
</dbReference>
<dbReference type="RefSeq" id="WP_011886609.1">
    <property type="nucleotide sequence ID" value="NC_009328.1"/>
</dbReference>
<dbReference type="SMR" id="A4IJC9"/>
<dbReference type="GeneID" id="87622400"/>
<dbReference type="KEGG" id="gtn:GTNG_0046"/>
<dbReference type="eggNOG" id="COG0193">
    <property type="taxonomic scope" value="Bacteria"/>
</dbReference>
<dbReference type="HOGENOM" id="CLU_062456_4_1_9"/>
<dbReference type="Proteomes" id="UP000001578">
    <property type="component" value="Chromosome"/>
</dbReference>
<dbReference type="GO" id="GO:0005737">
    <property type="term" value="C:cytoplasm"/>
    <property type="evidence" value="ECO:0007669"/>
    <property type="project" value="UniProtKB-SubCell"/>
</dbReference>
<dbReference type="GO" id="GO:0004045">
    <property type="term" value="F:peptidyl-tRNA hydrolase activity"/>
    <property type="evidence" value="ECO:0007669"/>
    <property type="project" value="UniProtKB-UniRule"/>
</dbReference>
<dbReference type="GO" id="GO:0000049">
    <property type="term" value="F:tRNA binding"/>
    <property type="evidence" value="ECO:0007669"/>
    <property type="project" value="UniProtKB-UniRule"/>
</dbReference>
<dbReference type="GO" id="GO:0006515">
    <property type="term" value="P:protein quality control for misfolded or incompletely synthesized proteins"/>
    <property type="evidence" value="ECO:0007669"/>
    <property type="project" value="UniProtKB-UniRule"/>
</dbReference>
<dbReference type="GO" id="GO:0072344">
    <property type="term" value="P:rescue of stalled ribosome"/>
    <property type="evidence" value="ECO:0007669"/>
    <property type="project" value="UniProtKB-UniRule"/>
</dbReference>
<dbReference type="CDD" id="cd00462">
    <property type="entry name" value="PTH"/>
    <property type="match status" value="1"/>
</dbReference>
<dbReference type="FunFam" id="3.40.50.1470:FF:000001">
    <property type="entry name" value="Peptidyl-tRNA hydrolase"/>
    <property type="match status" value="1"/>
</dbReference>
<dbReference type="Gene3D" id="3.40.50.1470">
    <property type="entry name" value="Peptidyl-tRNA hydrolase"/>
    <property type="match status" value="1"/>
</dbReference>
<dbReference type="HAMAP" id="MF_00083">
    <property type="entry name" value="Pept_tRNA_hydro_bact"/>
    <property type="match status" value="1"/>
</dbReference>
<dbReference type="InterPro" id="IPR001328">
    <property type="entry name" value="Pept_tRNA_hydro"/>
</dbReference>
<dbReference type="InterPro" id="IPR018171">
    <property type="entry name" value="Pept_tRNA_hydro_CS"/>
</dbReference>
<dbReference type="InterPro" id="IPR036416">
    <property type="entry name" value="Pept_tRNA_hydro_sf"/>
</dbReference>
<dbReference type="NCBIfam" id="TIGR00447">
    <property type="entry name" value="pth"/>
    <property type="match status" value="1"/>
</dbReference>
<dbReference type="PANTHER" id="PTHR17224">
    <property type="entry name" value="PEPTIDYL-TRNA HYDROLASE"/>
    <property type="match status" value="1"/>
</dbReference>
<dbReference type="PANTHER" id="PTHR17224:SF1">
    <property type="entry name" value="PEPTIDYL-TRNA HYDROLASE"/>
    <property type="match status" value="1"/>
</dbReference>
<dbReference type="Pfam" id="PF01195">
    <property type="entry name" value="Pept_tRNA_hydro"/>
    <property type="match status" value="1"/>
</dbReference>
<dbReference type="SUPFAM" id="SSF53178">
    <property type="entry name" value="Peptidyl-tRNA hydrolase-like"/>
    <property type="match status" value="1"/>
</dbReference>
<dbReference type="PROSITE" id="PS01195">
    <property type="entry name" value="PEPT_TRNA_HYDROL_1"/>
    <property type="match status" value="1"/>
</dbReference>
<dbReference type="PROSITE" id="PS01196">
    <property type="entry name" value="PEPT_TRNA_HYDROL_2"/>
    <property type="match status" value="1"/>
</dbReference>
<keyword id="KW-0963">Cytoplasm</keyword>
<keyword id="KW-0378">Hydrolase</keyword>
<keyword id="KW-0694">RNA-binding</keyword>
<keyword id="KW-0820">tRNA-binding</keyword>
<organism>
    <name type="scientific">Geobacillus thermodenitrificans (strain NG80-2)</name>
    <dbReference type="NCBI Taxonomy" id="420246"/>
    <lineage>
        <taxon>Bacteria</taxon>
        <taxon>Bacillati</taxon>
        <taxon>Bacillota</taxon>
        <taxon>Bacilli</taxon>
        <taxon>Bacillales</taxon>
        <taxon>Anoxybacillaceae</taxon>
        <taxon>Geobacillus</taxon>
    </lineage>
</organism>
<feature type="chain" id="PRO_1000010593" description="Peptidyl-tRNA hydrolase">
    <location>
        <begin position="1"/>
        <end position="186"/>
    </location>
</feature>
<feature type="active site" description="Proton acceptor" evidence="1">
    <location>
        <position position="19"/>
    </location>
</feature>
<feature type="binding site" evidence="1">
    <location>
        <position position="14"/>
    </location>
    <ligand>
        <name>tRNA</name>
        <dbReference type="ChEBI" id="CHEBI:17843"/>
    </ligand>
</feature>
<feature type="binding site" evidence="1">
    <location>
        <position position="64"/>
    </location>
    <ligand>
        <name>tRNA</name>
        <dbReference type="ChEBI" id="CHEBI:17843"/>
    </ligand>
</feature>
<feature type="binding site" evidence="1">
    <location>
        <position position="66"/>
    </location>
    <ligand>
        <name>tRNA</name>
        <dbReference type="ChEBI" id="CHEBI:17843"/>
    </ligand>
</feature>
<feature type="binding site" evidence="1">
    <location>
        <position position="112"/>
    </location>
    <ligand>
        <name>tRNA</name>
        <dbReference type="ChEBI" id="CHEBI:17843"/>
    </ligand>
</feature>
<feature type="site" description="Discriminates between blocked and unblocked aminoacyl-tRNA" evidence="1">
    <location>
        <position position="9"/>
    </location>
</feature>
<feature type="site" description="Stabilizes the basic form of H active site to accept a proton" evidence="1">
    <location>
        <position position="91"/>
    </location>
</feature>
<name>PTH_GEOTN</name>
<evidence type="ECO:0000255" key="1">
    <source>
        <dbReference type="HAMAP-Rule" id="MF_00083"/>
    </source>
</evidence>
<gene>
    <name evidence="1" type="primary">pth</name>
    <name type="ordered locus">GTNG_0046</name>
</gene>
<reference key="1">
    <citation type="journal article" date="2007" name="Proc. Natl. Acad. Sci. U.S.A.">
        <title>Genome and proteome of long-chain alkane degrading Geobacillus thermodenitrificans NG80-2 isolated from a deep-subsurface oil reservoir.</title>
        <authorList>
            <person name="Feng L."/>
            <person name="Wang W."/>
            <person name="Cheng J."/>
            <person name="Ren Y."/>
            <person name="Zhao G."/>
            <person name="Gao C."/>
            <person name="Tang Y."/>
            <person name="Liu X."/>
            <person name="Han W."/>
            <person name="Peng X."/>
            <person name="Liu R."/>
            <person name="Wang L."/>
        </authorList>
    </citation>
    <scope>NUCLEOTIDE SEQUENCE [LARGE SCALE GENOMIC DNA]</scope>
    <source>
        <strain>NG80-2</strain>
    </source>
</reference>
<sequence>MKLFVGLGNPGKEYEQTRHNIGFFVIDELAKRWNVSLKTAKFRGLFGTASVFGEKVALCKPLTYMNLSGECVCPLIDFYDIAVDDVIIIYDDLDLPPGKIRLRLKGGSGGHNGVKSIIHHLGTEQFKRIRIGIGRPTNGQPVADYVLSRFTEEEKPAVMEAVLRAADACEQAVTTPFIQVMNDFNE</sequence>
<comment type="function">
    <text evidence="1">Hydrolyzes ribosome-free peptidyl-tRNAs (with 1 or more amino acids incorporated), which drop off the ribosome during protein synthesis, or as a result of ribosome stalling.</text>
</comment>
<comment type="function">
    <text evidence="1">Catalyzes the release of premature peptidyl moieties from peptidyl-tRNA molecules trapped in stalled 50S ribosomal subunits, and thus maintains levels of free tRNAs and 50S ribosomes.</text>
</comment>
<comment type="catalytic activity">
    <reaction evidence="1">
        <text>an N-acyl-L-alpha-aminoacyl-tRNA + H2O = an N-acyl-L-amino acid + a tRNA + H(+)</text>
        <dbReference type="Rhea" id="RHEA:54448"/>
        <dbReference type="Rhea" id="RHEA-COMP:10123"/>
        <dbReference type="Rhea" id="RHEA-COMP:13883"/>
        <dbReference type="ChEBI" id="CHEBI:15377"/>
        <dbReference type="ChEBI" id="CHEBI:15378"/>
        <dbReference type="ChEBI" id="CHEBI:59874"/>
        <dbReference type="ChEBI" id="CHEBI:78442"/>
        <dbReference type="ChEBI" id="CHEBI:138191"/>
        <dbReference type="EC" id="3.1.1.29"/>
    </reaction>
</comment>
<comment type="subunit">
    <text evidence="1">Monomer.</text>
</comment>
<comment type="subcellular location">
    <subcellularLocation>
        <location evidence="1">Cytoplasm</location>
    </subcellularLocation>
</comment>
<comment type="similarity">
    <text evidence="1">Belongs to the PTH family.</text>
</comment>
<protein>
    <recommendedName>
        <fullName evidence="1">Peptidyl-tRNA hydrolase</fullName>
        <shortName evidence="1">Pth</shortName>
        <ecNumber evidence="1">3.1.1.29</ecNumber>
    </recommendedName>
</protein>
<proteinExistence type="inferred from homology"/>
<accession>A4IJC9</accession>